<evidence type="ECO:0000255" key="1">
    <source>
        <dbReference type="HAMAP-Rule" id="MF_01039"/>
    </source>
</evidence>
<feature type="chain" id="PRO_0000179847" description="2,3-bisphosphoglycerate-dependent phosphoglycerate mutase 2">
    <location>
        <begin position="1"/>
        <end position="248"/>
    </location>
</feature>
<feature type="active site" description="Tele-phosphohistidine intermediate" evidence="1">
    <location>
        <position position="9"/>
    </location>
</feature>
<feature type="active site" description="Proton donor/acceptor" evidence="1">
    <location>
        <position position="87"/>
    </location>
</feature>
<feature type="binding site" evidence="1">
    <location>
        <begin position="8"/>
        <end position="15"/>
    </location>
    <ligand>
        <name>substrate</name>
    </ligand>
</feature>
<feature type="binding site" evidence="1">
    <location>
        <begin position="21"/>
        <end position="22"/>
    </location>
    <ligand>
        <name>substrate</name>
    </ligand>
</feature>
<feature type="binding site" evidence="1">
    <location>
        <position position="60"/>
    </location>
    <ligand>
        <name>substrate</name>
    </ligand>
</feature>
<feature type="binding site" evidence="1">
    <location>
        <begin position="87"/>
        <end position="90"/>
    </location>
    <ligand>
        <name>substrate</name>
    </ligand>
</feature>
<feature type="binding site" evidence="1">
    <location>
        <position position="98"/>
    </location>
    <ligand>
        <name>substrate</name>
    </ligand>
</feature>
<feature type="binding site" evidence="1">
    <location>
        <begin position="114"/>
        <end position="115"/>
    </location>
    <ligand>
        <name>substrate</name>
    </ligand>
</feature>
<feature type="binding site" evidence="1">
    <location>
        <begin position="183"/>
        <end position="184"/>
    </location>
    <ligand>
        <name>substrate</name>
    </ligand>
</feature>
<feature type="site" description="Transition state stabilizer" evidence="1">
    <location>
        <position position="182"/>
    </location>
</feature>
<gene>
    <name evidence="1" type="primary">gpmA2</name>
    <name type="ordered locus">BT_1660</name>
</gene>
<proteinExistence type="inferred from homology"/>
<protein>
    <recommendedName>
        <fullName evidence="1">2,3-bisphosphoglycerate-dependent phosphoglycerate mutase 2</fullName>
        <shortName evidence="1">BPG-dependent PGAM 2</shortName>
        <shortName evidence="1">PGAM 2</shortName>
        <shortName evidence="1">Phosphoglyceromutase 2</shortName>
        <shortName evidence="1">dPGM 2</shortName>
        <ecNumber evidence="1">5.4.2.11</ecNumber>
    </recommendedName>
</protein>
<sequence>MKKIVLLRHGESAWNKENRFTGWTDVDLTEKGVAEAEKAGVTLREYGFNFDKAYTSYLKRAVKTLNCVLDKMNLDWIPVEKSWRLNEKHYGDLQGLNKAETAEKYGEEQVLIWRRSYDIAPNPLSESDLRNPRFDYRYHEVSDAELPRTESLKDTIDRIMPYWESDIFPALKDAHTLLVVAHGNSLRGIIKHLKHISDEDIIKLNLPTAVPYVFEFDENLNVANDYFLGNPEEIRKLMEAVANQGKKK</sequence>
<name>GPMA2_BACTN</name>
<keyword id="KW-0312">Gluconeogenesis</keyword>
<keyword id="KW-0324">Glycolysis</keyword>
<keyword id="KW-0413">Isomerase</keyword>
<keyword id="KW-1185">Reference proteome</keyword>
<dbReference type="EC" id="5.4.2.11" evidence="1"/>
<dbReference type="EMBL" id="AE015928">
    <property type="protein sequence ID" value="AAO76767.1"/>
    <property type="molecule type" value="Genomic_DNA"/>
</dbReference>
<dbReference type="RefSeq" id="NP_810573.1">
    <property type="nucleotide sequence ID" value="NC_004663.1"/>
</dbReference>
<dbReference type="RefSeq" id="WP_011107928.1">
    <property type="nucleotide sequence ID" value="NC_004663.1"/>
</dbReference>
<dbReference type="SMR" id="Q8A765"/>
<dbReference type="FunCoup" id="Q8A765">
    <property type="interactions" value="441"/>
</dbReference>
<dbReference type="STRING" id="226186.BT_1660"/>
<dbReference type="PaxDb" id="226186-BT_1660"/>
<dbReference type="EnsemblBacteria" id="AAO76767">
    <property type="protein sequence ID" value="AAO76767"/>
    <property type="gene ID" value="BT_1660"/>
</dbReference>
<dbReference type="GeneID" id="60927646"/>
<dbReference type="KEGG" id="bth:BT_1660"/>
<dbReference type="PATRIC" id="fig|226186.12.peg.1701"/>
<dbReference type="eggNOG" id="COG0588">
    <property type="taxonomic scope" value="Bacteria"/>
</dbReference>
<dbReference type="HOGENOM" id="CLU_033323_1_1_10"/>
<dbReference type="InParanoid" id="Q8A765"/>
<dbReference type="OrthoDB" id="9782128at2"/>
<dbReference type="UniPathway" id="UPA00109">
    <property type="reaction ID" value="UER00186"/>
</dbReference>
<dbReference type="Proteomes" id="UP000001414">
    <property type="component" value="Chromosome"/>
</dbReference>
<dbReference type="GO" id="GO:0004619">
    <property type="term" value="F:phosphoglycerate mutase activity"/>
    <property type="evidence" value="ECO:0007669"/>
    <property type="project" value="UniProtKB-EC"/>
</dbReference>
<dbReference type="GO" id="GO:0006094">
    <property type="term" value="P:gluconeogenesis"/>
    <property type="evidence" value="ECO:0007669"/>
    <property type="project" value="UniProtKB-UniRule"/>
</dbReference>
<dbReference type="GO" id="GO:0006096">
    <property type="term" value="P:glycolytic process"/>
    <property type="evidence" value="ECO:0007669"/>
    <property type="project" value="UniProtKB-UniRule"/>
</dbReference>
<dbReference type="CDD" id="cd07067">
    <property type="entry name" value="HP_PGM_like"/>
    <property type="match status" value="1"/>
</dbReference>
<dbReference type="FunFam" id="3.40.50.1240:FF:000003">
    <property type="entry name" value="2,3-bisphosphoglycerate-dependent phosphoglycerate mutase"/>
    <property type="match status" value="1"/>
</dbReference>
<dbReference type="Gene3D" id="3.40.50.1240">
    <property type="entry name" value="Phosphoglycerate mutase-like"/>
    <property type="match status" value="1"/>
</dbReference>
<dbReference type="HAMAP" id="MF_01039">
    <property type="entry name" value="PGAM_GpmA"/>
    <property type="match status" value="1"/>
</dbReference>
<dbReference type="InterPro" id="IPR013078">
    <property type="entry name" value="His_Pase_superF_clade-1"/>
</dbReference>
<dbReference type="InterPro" id="IPR029033">
    <property type="entry name" value="His_PPase_superfam"/>
</dbReference>
<dbReference type="InterPro" id="IPR001345">
    <property type="entry name" value="PG/BPGM_mutase_AS"/>
</dbReference>
<dbReference type="InterPro" id="IPR005952">
    <property type="entry name" value="Phosphogly_mut1"/>
</dbReference>
<dbReference type="NCBIfam" id="TIGR01258">
    <property type="entry name" value="pgm_1"/>
    <property type="match status" value="1"/>
</dbReference>
<dbReference type="NCBIfam" id="NF010713">
    <property type="entry name" value="PRK14115.1"/>
    <property type="match status" value="1"/>
</dbReference>
<dbReference type="PANTHER" id="PTHR11931">
    <property type="entry name" value="PHOSPHOGLYCERATE MUTASE"/>
    <property type="match status" value="1"/>
</dbReference>
<dbReference type="Pfam" id="PF00300">
    <property type="entry name" value="His_Phos_1"/>
    <property type="match status" value="2"/>
</dbReference>
<dbReference type="PIRSF" id="PIRSF000709">
    <property type="entry name" value="6PFK_2-Ptase"/>
    <property type="match status" value="1"/>
</dbReference>
<dbReference type="SMART" id="SM00855">
    <property type="entry name" value="PGAM"/>
    <property type="match status" value="1"/>
</dbReference>
<dbReference type="SUPFAM" id="SSF53254">
    <property type="entry name" value="Phosphoglycerate mutase-like"/>
    <property type="match status" value="1"/>
</dbReference>
<dbReference type="PROSITE" id="PS00175">
    <property type="entry name" value="PG_MUTASE"/>
    <property type="match status" value="1"/>
</dbReference>
<comment type="function">
    <text evidence="1">Catalyzes the interconversion of 2-phosphoglycerate and 3-phosphoglycerate.</text>
</comment>
<comment type="catalytic activity">
    <reaction evidence="1">
        <text>(2R)-2-phosphoglycerate = (2R)-3-phosphoglycerate</text>
        <dbReference type="Rhea" id="RHEA:15901"/>
        <dbReference type="ChEBI" id="CHEBI:58272"/>
        <dbReference type="ChEBI" id="CHEBI:58289"/>
        <dbReference type="EC" id="5.4.2.11"/>
    </reaction>
</comment>
<comment type="pathway">
    <text evidence="1">Carbohydrate degradation; glycolysis; pyruvate from D-glyceraldehyde 3-phosphate: step 3/5.</text>
</comment>
<comment type="similarity">
    <text evidence="1">Belongs to the phosphoglycerate mutase family. BPG-dependent PGAM subfamily.</text>
</comment>
<organism>
    <name type="scientific">Bacteroides thetaiotaomicron (strain ATCC 29148 / DSM 2079 / JCM 5827 / CCUG 10774 / NCTC 10582 / VPI-5482 / E50)</name>
    <dbReference type="NCBI Taxonomy" id="226186"/>
    <lineage>
        <taxon>Bacteria</taxon>
        <taxon>Pseudomonadati</taxon>
        <taxon>Bacteroidota</taxon>
        <taxon>Bacteroidia</taxon>
        <taxon>Bacteroidales</taxon>
        <taxon>Bacteroidaceae</taxon>
        <taxon>Bacteroides</taxon>
    </lineage>
</organism>
<accession>Q8A765</accession>
<reference key="1">
    <citation type="journal article" date="2003" name="Science">
        <title>A genomic view of the human-Bacteroides thetaiotaomicron symbiosis.</title>
        <authorList>
            <person name="Xu J."/>
            <person name="Bjursell M.K."/>
            <person name="Himrod J."/>
            <person name="Deng S."/>
            <person name="Carmichael L.K."/>
            <person name="Chiang H.C."/>
            <person name="Hooper L.V."/>
            <person name="Gordon J.I."/>
        </authorList>
    </citation>
    <scope>NUCLEOTIDE SEQUENCE [LARGE SCALE GENOMIC DNA]</scope>
    <source>
        <strain>ATCC 29148 / DSM 2079 / JCM 5827 / CCUG 10774 / NCTC 10582 / VPI-5482 / E50</strain>
    </source>
</reference>